<gene>
    <name evidence="1" type="primary">lpxB</name>
    <name type="ordered locus">XCC1360</name>
</gene>
<comment type="function">
    <text evidence="1">Condensation of UDP-2,3-diacylglucosamine and 2,3-diacylglucosamine-1-phosphate to form lipid A disaccharide, a precursor of lipid A, a phosphorylated glycolipid that anchors the lipopolysaccharide to the outer membrane of the cell.</text>
</comment>
<comment type="catalytic activity">
    <reaction evidence="1">
        <text>a lipid X + a UDP-2-N,3-O-bis[(3R)-3-hydroxyacyl]-alpha-D-glucosamine = a lipid A disaccharide + UDP + H(+)</text>
        <dbReference type="Rhea" id="RHEA:67828"/>
        <dbReference type="ChEBI" id="CHEBI:15378"/>
        <dbReference type="ChEBI" id="CHEBI:58223"/>
        <dbReference type="ChEBI" id="CHEBI:137748"/>
        <dbReference type="ChEBI" id="CHEBI:176338"/>
        <dbReference type="ChEBI" id="CHEBI:176343"/>
        <dbReference type="EC" id="2.4.1.182"/>
    </reaction>
</comment>
<comment type="pathway">
    <text evidence="1">Bacterial outer membrane biogenesis; LPS lipid A biosynthesis.</text>
</comment>
<comment type="similarity">
    <text evidence="1">Belongs to the LpxB family.</text>
</comment>
<comment type="sequence caution" evidence="2">
    <conflict type="erroneous initiation">
        <sequence resource="EMBL-CDS" id="AAM40658"/>
    </conflict>
</comment>
<protein>
    <recommendedName>
        <fullName evidence="1">Lipid-A-disaccharide synthase</fullName>
        <ecNumber evidence="1">2.4.1.182</ecNumber>
    </recommendedName>
</protein>
<sequence>MTGIGNREPEHGAGAHVGAAVSVPDAASIPHSPLPIPGARMRAPRIALIAGEASGDILGAGLIDALRRRYPDAEFVGIGGDAMRSAGCQTWFDASELAVMGLTEVLRHLPRLLKLRSAFRERVLAWKPDVFIGIDAPDFNLPVERWLKQRGVRTVHYVSPSVWAWREKRAEKIGVSADLVLCLFPMEPPIYAKHGVDARFVGHPMADAIAYQADREAARAKLGLSTSSTVLAVLPGSRHGEISRLGDTFFQAAWLVSEHLPNLHVLVPAANPGCKQLLAEQLSRSSLPVMRSHLLDGQARTAMLAADVVLLASGTATLEAMLVKRPMVVGYKVAPLTYRIVKTLGLLKVNRYALPNILANEDLAPELMQDDCTPERLCEALLDWFKHPEKVAGLQSRYLALHAQLRQDASARAAEAVAELLTQRELGIGNRESGGAGS</sequence>
<organism>
    <name type="scientific">Xanthomonas campestris pv. campestris (strain ATCC 33913 / DSM 3586 / NCPPB 528 / LMG 568 / P 25)</name>
    <dbReference type="NCBI Taxonomy" id="190485"/>
    <lineage>
        <taxon>Bacteria</taxon>
        <taxon>Pseudomonadati</taxon>
        <taxon>Pseudomonadota</taxon>
        <taxon>Gammaproteobacteria</taxon>
        <taxon>Lysobacterales</taxon>
        <taxon>Lysobacteraceae</taxon>
        <taxon>Xanthomonas</taxon>
    </lineage>
</organism>
<reference key="1">
    <citation type="journal article" date="2002" name="Nature">
        <title>Comparison of the genomes of two Xanthomonas pathogens with differing host specificities.</title>
        <authorList>
            <person name="da Silva A.C.R."/>
            <person name="Ferro J.A."/>
            <person name="Reinach F.C."/>
            <person name="Farah C.S."/>
            <person name="Furlan L.R."/>
            <person name="Quaggio R.B."/>
            <person name="Monteiro-Vitorello C.B."/>
            <person name="Van Sluys M.A."/>
            <person name="Almeida N.F. Jr."/>
            <person name="Alves L.M.C."/>
            <person name="do Amaral A.M."/>
            <person name="Bertolini M.C."/>
            <person name="Camargo L.E.A."/>
            <person name="Camarotte G."/>
            <person name="Cannavan F."/>
            <person name="Cardozo J."/>
            <person name="Chambergo F."/>
            <person name="Ciapina L.P."/>
            <person name="Cicarelli R.M.B."/>
            <person name="Coutinho L.L."/>
            <person name="Cursino-Santos J.R."/>
            <person name="El-Dorry H."/>
            <person name="Faria J.B."/>
            <person name="Ferreira A.J.S."/>
            <person name="Ferreira R.C.C."/>
            <person name="Ferro M.I.T."/>
            <person name="Formighieri E.F."/>
            <person name="Franco M.C."/>
            <person name="Greggio C.C."/>
            <person name="Gruber A."/>
            <person name="Katsuyama A.M."/>
            <person name="Kishi L.T."/>
            <person name="Leite R.P."/>
            <person name="Lemos E.G.M."/>
            <person name="Lemos M.V.F."/>
            <person name="Locali E.C."/>
            <person name="Machado M.A."/>
            <person name="Madeira A.M.B.N."/>
            <person name="Martinez-Rossi N.M."/>
            <person name="Martins E.C."/>
            <person name="Meidanis J."/>
            <person name="Menck C.F.M."/>
            <person name="Miyaki C.Y."/>
            <person name="Moon D.H."/>
            <person name="Moreira L.M."/>
            <person name="Novo M.T.M."/>
            <person name="Okura V.K."/>
            <person name="Oliveira M.C."/>
            <person name="Oliveira V.R."/>
            <person name="Pereira H.A."/>
            <person name="Rossi A."/>
            <person name="Sena J.A.D."/>
            <person name="Silva C."/>
            <person name="de Souza R.F."/>
            <person name="Spinola L.A.F."/>
            <person name="Takita M.A."/>
            <person name="Tamura R.E."/>
            <person name="Teixeira E.C."/>
            <person name="Tezza R.I.D."/>
            <person name="Trindade dos Santos M."/>
            <person name="Truffi D."/>
            <person name="Tsai S.M."/>
            <person name="White F.F."/>
            <person name="Setubal J.C."/>
            <person name="Kitajima J.P."/>
        </authorList>
    </citation>
    <scope>NUCLEOTIDE SEQUENCE [LARGE SCALE GENOMIC DNA]</scope>
    <source>
        <strain>ATCC 33913 / DSM 3586 / NCPPB 528 / LMG 568 / P 25</strain>
    </source>
</reference>
<feature type="chain" id="PRO_0000190194" description="Lipid-A-disaccharide synthase">
    <location>
        <begin position="1"/>
        <end position="438"/>
    </location>
</feature>
<dbReference type="EC" id="2.4.1.182" evidence="1"/>
<dbReference type="EMBL" id="AE008922">
    <property type="protein sequence ID" value="AAM40658.1"/>
    <property type="status" value="ALT_INIT"/>
    <property type="molecule type" value="Genomic_DNA"/>
</dbReference>
<dbReference type="RefSeq" id="NP_636734.1">
    <property type="nucleotide sequence ID" value="NC_003902.1"/>
</dbReference>
<dbReference type="RefSeq" id="WP_029629001.1">
    <property type="nucleotide sequence ID" value="NC_003902.1"/>
</dbReference>
<dbReference type="SMR" id="Q8PAW6"/>
<dbReference type="STRING" id="190485.XCC1360"/>
<dbReference type="CAZy" id="GT19">
    <property type="family name" value="Glycosyltransferase Family 19"/>
</dbReference>
<dbReference type="DNASU" id="1001765"/>
<dbReference type="EnsemblBacteria" id="AAM40658">
    <property type="protein sequence ID" value="AAM40658"/>
    <property type="gene ID" value="XCC1360"/>
</dbReference>
<dbReference type="KEGG" id="xcc:XCC1360"/>
<dbReference type="PATRIC" id="fig|190485.4.peg.1462"/>
<dbReference type="eggNOG" id="COG0763">
    <property type="taxonomic scope" value="Bacteria"/>
</dbReference>
<dbReference type="HOGENOM" id="CLU_036577_3_0_6"/>
<dbReference type="OrthoDB" id="9801642at2"/>
<dbReference type="UniPathway" id="UPA00973"/>
<dbReference type="Proteomes" id="UP000001010">
    <property type="component" value="Chromosome"/>
</dbReference>
<dbReference type="GO" id="GO:0016020">
    <property type="term" value="C:membrane"/>
    <property type="evidence" value="ECO:0007669"/>
    <property type="project" value="GOC"/>
</dbReference>
<dbReference type="GO" id="GO:0008915">
    <property type="term" value="F:lipid-A-disaccharide synthase activity"/>
    <property type="evidence" value="ECO:0007669"/>
    <property type="project" value="UniProtKB-UniRule"/>
</dbReference>
<dbReference type="GO" id="GO:0005543">
    <property type="term" value="F:phospholipid binding"/>
    <property type="evidence" value="ECO:0000318"/>
    <property type="project" value="GO_Central"/>
</dbReference>
<dbReference type="GO" id="GO:0009245">
    <property type="term" value="P:lipid A biosynthetic process"/>
    <property type="evidence" value="ECO:0000318"/>
    <property type="project" value="GO_Central"/>
</dbReference>
<dbReference type="HAMAP" id="MF_00392">
    <property type="entry name" value="LpxB"/>
    <property type="match status" value="1"/>
</dbReference>
<dbReference type="InterPro" id="IPR003835">
    <property type="entry name" value="Glyco_trans_19"/>
</dbReference>
<dbReference type="NCBIfam" id="TIGR00215">
    <property type="entry name" value="lpxB"/>
    <property type="match status" value="1"/>
</dbReference>
<dbReference type="PANTHER" id="PTHR30372">
    <property type="entry name" value="LIPID-A-DISACCHARIDE SYNTHASE"/>
    <property type="match status" value="1"/>
</dbReference>
<dbReference type="PANTHER" id="PTHR30372:SF4">
    <property type="entry name" value="LIPID-A-DISACCHARIDE SYNTHASE, MITOCHONDRIAL-RELATED"/>
    <property type="match status" value="1"/>
</dbReference>
<dbReference type="Pfam" id="PF02684">
    <property type="entry name" value="LpxB"/>
    <property type="match status" value="1"/>
</dbReference>
<dbReference type="SUPFAM" id="SSF53756">
    <property type="entry name" value="UDP-Glycosyltransferase/glycogen phosphorylase"/>
    <property type="match status" value="1"/>
</dbReference>
<evidence type="ECO:0000255" key="1">
    <source>
        <dbReference type="HAMAP-Rule" id="MF_00392"/>
    </source>
</evidence>
<evidence type="ECO:0000305" key="2"/>
<keyword id="KW-0328">Glycosyltransferase</keyword>
<keyword id="KW-0441">Lipid A biosynthesis</keyword>
<keyword id="KW-0444">Lipid biosynthesis</keyword>
<keyword id="KW-0443">Lipid metabolism</keyword>
<keyword id="KW-1185">Reference proteome</keyword>
<keyword id="KW-0808">Transferase</keyword>
<name>LPXB_XANCP</name>
<proteinExistence type="inferred from homology"/>
<accession>Q8PAW6</accession>